<protein>
    <recommendedName>
        <fullName evidence="1">Multidrug resistance protein MdtH</fullName>
    </recommendedName>
</protein>
<proteinExistence type="inferred from homology"/>
<evidence type="ECO:0000255" key="1">
    <source>
        <dbReference type="HAMAP-Rule" id="MF_01529"/>
    </source>
</evidence>
<feature type="chain" id="PRO_1000068676" description="Multidrug resistance protein MdtH">
    <location>
        <begin position="1"/>
        <end position="402"/>
    </location>
</feature>
<feature type="topological domain" description="Cytoplasmic" evidence="1">
    <location>
        <begin position="1"/>
        <end position="12"/>
    </location>
</feature>
<feature type="transmembrane region" description="Helical" evidence="1">
    <location>
        <begin position="13"/>
        <end position="33"/>
    </location>
</feature>
<feature type="topological domain" description="Periplasmic" evidence="1">
    <location>
        <begin position="34"/>
        <end position="98"/>
    </location>
</feature>
<feature type="transmembrane region" description="Helical" evidence="1">
    <location>
        <begin position="99"/>
        <end position="116"/>
    </location>
</feature>
<feature type="topological domain" description="Cytoplasmic" evidence="1">
    <location>
        <begin position="117"/>
        <end position="138"/>
    </location>
</feature>
<feature type="transmembrane region" description="Helical" evidence="1">
    <location>
        <begin position="139"/>
        <end position="159"/>
    </location>
</feature>
<feature type="topological domain" description="Periplasmic" evidence="1">
    <location>
        <begin position="160"/>
        <end position="164"/>
    </location>
</feature>
<feature type="transmembrane region" description="Helical" evidence="1">
    <location>
        <begin position="165"/>
        <end position="185"/>
    </location>
</feature>
<feature type="topological domain" description="Cytoplasmic" evidence="1">
    <location>
        <begin position="186"/>
        <end position="213"/>
    </location>
</feature>
<feature type="transmembrane region" description="Helical" evidence="1">
    <location>
        <begin position="214"/>
        <end position="234"/>
    </location>
</feature>
<feature type="topological domain" description="Periplasmic" evidence="1">
    <location>
        <begin position="235"/>
        <end position="243"/>
    </location>
</feature>
<feature type="transmembrane region" description="Helical" evidence="1">
    <location>
        <begin position="244"/>
        <end position="264"/>
    </location>
</feature>
<feature type="topological domain" description="Cytoplasmic" evidence="1">
    <location>
        <begin position="265"/>
        <end position="276"/>
    </location>
</feature>
<feature type="transmembrane region" description="Helical" evidence="1">
    <location>
        <begin position="277"/>
        <end position="297"/>
    </location>
</feature>
<feature type="topological domain" description="Periplasmic" evidence="1">
    <location>
        <begin position="298"/>
        <end position="299"/>
    </location>
</feature>
<feature type="transmembrane region" description="Helical" evidence="1">
    <location>
        <begin position="300"/>
        <end position="320"/>
    </location>
</feature>
<feature type="topological domain" description="Cytoplasmic" evidence="1">
    <location>
        <begin position="321"/>
        <end position="339"/>
    </location>
</feature>
<feature type="transmembrane region" description="Helical" evidence="1">
    <location>
        <begin position="340"/>
        <end position="360"/>
    </location>
</feature>
<feature type="topological domain" description="Periplasmic" evidence="1">
    <location>
        <begin position="361"/>
        <end position="367"/>
    </location>
</feature>
<feature type="transmembrane region" description="Helical" evidence="1">
    <location>
        <begin position="368"/>
        <end position="388"/>
    </location>
</feature>
<feature type="topological domain" description="Cytoplasmic" evidence="1">
    <location>
        <begin position="389"/>
        <end position="402"/>
    </location>
</feature>
<reference key="1">
    <citation type="journal article" date="2008" name="J. Bacteriol.">
        <title>The pangenome structure of Escherichia coli: comparative genomic analysis of E. coli commensal and pathogenic isolates.</title>
        <authorList>
            <person name="Rasko D.A."/>
            <person name="Rosovitz M.J."/>
            <person name="Myers G.S.A."/>
            <person name="Mongodin E.F."/>
            <person name="Fricke W.F."/>
            <person name="Gajer P."/>
            <person name="Crabtree J."/>
            <person name="Sebaihia M."/>
            <person name="Thomson N.R."/>
            <person name="Chaudhuri R."/>
            <person name="Henderson I.R."/>
            <person name="Sperandio V."/>
            <person name="Ravel J."/>
        </authorList>
    </citation>
    <scope>NUCLEOTIDE SEQUENCE [LARGE SCALE GENOMIC DNA]</scope>
    <source>
        <strain>E24377A / ETEC</strain>
    </source>
</reference>
<organism>
    <name type="scientific">Escherichia coli O139:H28 (strain E24377A / ETEC)</name>
    <dbReference type="NCBI Taxonomy" id="331111"/>
    <lineage>
        <taxon>Bacteria</taxon>
        <taxon>Pseudomonadati</taxon>
        <taxon>Pseudomonadota</taxon>
        <taxon>Gammaproteobacteria</taxon>
        <taxon>Enterobacterales</taxon>
        <taxon>Enterobacteriaceae</taxon>
        <taxon>Escherichia</taxon>
    </lineage>
</organism>
<comment type="function">
    <text evidence="1">Confers resistance to norfloxacin and enoxacin.</text>
</comment>
<comment type="subcellular location">
    <subcellularLocation>
        <location evidence="1">Cell inner membrane</location>
        <topology evidence="1">Multi-pass membrane protein</topology>
    </subcellularLocation>
</comment>
<comment type="similarity">
    <text evidence="1">Belongs to the major facilitator superfamily. DHA1 family. MdtH (TC 2.A.1.2.21) subfamily.</text>
</comment>
<name>MDTH_ECO24</name>
<keyword id="KW-0046">Antibiotic resistance</keyword>
<keyword id="KW-0997">Cell inner membrane</keyword>
<keyword id="KW-1003">Cell membrane</keyword>
<keyword id="KW-0472">Membrane</keyword>
<keyword id="KW-1185">Reference proteome</keyword>
<keyword id="KW-0812">Transmembrane</keyword>
<keyword id="KW-1133">Transmembrane helix</keyword>
<keyword id="KW-0813">Transport</keyword>
<accession>A7ZKH0</accession>
<sequence length="402" mass="44363">MSRVSQARNLGKYFLLIDNMLVVLGFFVVFPLISIRFVDQMGWAAVMVGIALGLRQFIQQGLGIFGGAIADRFGAKPMIVTGMLMRAAGFATMGIAHEPWLLWFSCLLSGLGGTLFDPPRSALVVKLIRPQQRGRFFSLLMMQDSAGAVIGALLGSWLLQYDFRLVCATGAVLFVLCAAFNAWLLPAWKLSTVRTPVREGMTRVMRDKRFVTYVLTLAGYYMLAVQVMLMLPIMVNDVAGAPSAVKWMYAIEACLSLTLLYPIARWSEKHFRLEHRLMAGLLIMSLSMMPVGMVSGLQQLFTLICLFYIGSIIAEPARETLSASLADARARGSYMGFSRLGLAIGGAIGYIGGGWLFDLGKSAHQPELPWMMLGIIGIFTFLALGWQFSQKRAARRLLERDA</sequence>
<dbReference type="EMBL" id="CP000800">
    <property type="protein sequence ID" value="ABV17682.1"/>
    <property type="molecule type" value="Genomic_DNA"/>
</dbReference>
<dbReference type="RefSeq" id="WP_000092206.1">
    <property type="nucleotide sequence ID" value="NC_009801.1"/>
</dbReference>
<dbReference type="SMR" id="A7ZKH0"/>
<dbReference type="GeneID" id="75203652"/>
<dbReference type="KEGG" id="ecw:EcE24377A_1188"/>
<dbReference type="HOGENOM" id="CLU_001265_60_2_6"/>
<dbReference type="Proteomes" id="UP000001122">
    <property type="component" value="Chromosome"/>
</dbReference>
<dbReference type="GO" id="GO:0005886">
    <property type="term" value="C:plasma membrane"/>
    <property type="evidence" value="ECO:0007669"/>
    <property type="project" value="UniProtKB-SubCell"/>
</dbReference>
<dbReference type="GO" id="GO:0022857">
    <property type="term" value="F:transmembrane transporter activity"/>
    <property type="evidence" value="ECO:0007669"/>
    <property type="project" value="UniProtKB-UniRule"/>
</dbReference>
<dbReference type="GO" id="GO:0046677">
    <property type="term" value="P:response to antibiotic"/>
    <property type="evidence" value="ECO:0007669"/>
    <property type="project" value="UniProtKB-KW"/>
</dbReference>
<dbReference type="CDD" id="cd17329">
    <property type="entry name" value="MFS_MdtH_MDR_like"/>
    <property type="match status" value="1"/>
</dbReference>
<dbReference type="FunFam" id="1.20.1250.20:FF:000039">
    <property type="entry name" value="Multidrug resistance protein MdtH"/>
    <property type="match status" value="1"/>
</dbReference>
<dbReference type="Gene3D" id="1.20.1250.20">
    <property type="entry name" value="MFS general substrate transporter like domains"/>
    <property type="match status" value="1"/>
</dbReference>
<dbReference type="HAMAP" id="MF_01529">
    <property type="entry name" value="MFS_MdtH"/>
    <property type="match status" value="1"/>
</dbReference>
<dbReference type="InterPro" id="IPR011701">
    <property type="entry name" value="MFS"/>
</dbReference>
<dbReference type="InterPro" id="IPR020846">
    <property type="entry name" value="MFS_dom"/>
</dbReference>
<dbReference type="InterPro" id="IPR036259">
    <property type="entry name" value="MFS_trans_sf"/>
</dbReference>
<dbReference type="InterPro" id="IPR050171">
    <property type="entry name" value="MFS_Transporters"/>
</dbReference>
<dbReference type="InterPro" id="IPR022855">
    <property type="entry name" value="Multidrug-R_MdtH"/>
</dbReference>
<dbReference type="NCBIfam" id="NF008650">
    <property type="entry name" value="PRK11646.1"/>
    <property type="match status" value="1"/>
</dbReference>
<dbReference type="PANTHER" id="PTHR23517:SF2">
    <property type="entry name" value="MULTIDRUG RESISTANCE PROTEIN MDTH"/>
    <property type="match status" value="1"/>
</dbReference>
<dbReference type="PANTHER" id="PTHR23517">
    <property type="entry name" value="RESISTANCE PROTEIN MDTM, PUTATIVE-RELATED-RELATED"/>
    <property type="match status" value="1"/>
</dbReference>
<dbReference type="Pfam" id="PF07690">
    <property type="entry name" value="MFS_1"/>
    <property type="match status" value="1"/>
</dbReference>
<dbReference type="SUPFAM" id="SSF103473">
    <property type="entry name" value="MFS general substrate transporter"/>
    <property type="match status" value="1"/>
</dbReference>
<dbReference type="PROSITE" id="PS50850">
    <property type="entry name" value="MFS"/>
    <property type="match status" value="1"/>
</dbReference>
<gene>
    <name evidence="1" type="primary">mdtH</name>
    <name type="ordered locus">EcE24377A_1188</name>
</gene>